<gene>
    <name evidence="1" type="primary">rsmJ</name>
    <name type="synonym">yhiQ</name>
    <name type="ordered locus">SFV_3509</name>
</gene>
<name>RSMJ_SHIF8</name>
<proteinExistence type="inferred from homology"/>
<accession>Q0SZG8</accession>
<evidence type="ECO:0000255" key="1">
    <source>
        <dbReference type="HAMAP-Rule" id="MF_01523"/>
    </source>
</evidence>
<protein>
    <recommendedName>
        <fullName evidence="1">Ribosomal RNA small subunit methyltransferase J</fullName>
        <ecNumber evidence="1">2.1.1.242</ecNumber>
    </recommendedName>
    <alternativeName>
        <fullName evidence="1">16S rRNA m2G1516 methyltransferase</fullName>
    </alternativeName>
    <alternativeName>
        <fullName evidence="1">rRNA (guanine-N(2)-)-methyltransferase</fullName>
    </alternativeName>
</protein>
<reference key="1">
    <citation type="journal article" date="2006" name="BMC Genomics">
        <title>Complete genome sequence of Shigella flexneri 5b and comparison with Shigella flexneri 2a.</title>
        <authorList>
            <person name="Nie H."/>
            <person name="Yang F."/>
            <person name="Zhang X."/>
            <person name="Yang J."/>
            <person name="Chen L."/>
            <person name="Wang J."/>
            <person name="Xiong Z."/>
            <person name="Peng J."/>
            <person name="Sun L."/>
            <person name="Dong J."/>
            <person name="Xue Y."/>
            <person name="Xu X."/>
            <person name="Chen S."/>
            <person name="Yao Z."/>
            <person name="Shen Y."/>
            <person name="Jin Q."/>
        </authorList>
    </citation>
    <scope>NUCLEOTIDE SEQUENCE [LARGE SCALE GENOMIC DNA]</scope>
    <source>
        <strain>8401</strain>
    </source>
</reference>
<dbReference type="EC" id="2.1.1.242" evidence="1"/>
<dbReference type="EMBL" id="CP000266">
    <property type="protein sequence ID" value="ABF05547.1"/>
    <property type="molecule type" value="Genomic_DNA"/>
</dbReference>
<dbReference type="RefSeq" id="WP_000686608.1">
    <property type="nucleotide sequence ID" value="NC_008258.1"/>
</dbReference>
<dbReference type="SMR" id="Q0SZG8"/>
<dbReference type="GeneID" id="93778496"/>
<dbReference type="KEGG" id="sfv:SFV_3509"/>
<dbReference type="HOGENOM" id="CLU_076324_0_0_6"/>
<dbReference type="Proteomes" id="UP000000659">
    <property type="component" value="Chromosome"/>
</dbReference>
<dbReference type="GO" id="GO:0005737">
    <property type="term" value="C:cytoplasm"/>
    <property type="evidence" value="ECO:0007669"/>
    <property type="project" value="UniProtKB-SubCell"/>
</dbReference>
<dbReference type="GO" id="GO:0008990">
    <property type="term" value="F:rRNA (guanine-N2-)-methyltransferase activity"/>
    <property type="evidence" value="ECO:0007669"/>
    <property type="project" value="UniProtKB-UniRule"/>
</dbReference>
<dbReference type="CDD" id="cd02440">
    <property type="entry name" value="AdoMet_MTases"/>
    <property type="match status" value="1"/>
</dbReference>
<dbReference type="FunFam" id="3.40.1630.10:FF:000001">
    <property type="entry name" value="Ribosomal RNA small subunit methyltransferase J"/>
    <property type="match status" value="1"/>
</dbReference>
<dbReference type="FunFam" id="3.40.50.150:FF:000072">
    <property type="entry name" value="Ribosomal RNA small subunit methyltransferase J"/>
    <property type="match status" value="1"/>
</dbReference>
<dbReference type="Gene3D" id="3.40.50.150">
    <property type="entry name" value="Vaccinia Virus protein VP39"/>
    <property type="match status" value="1"/>
</dbReference>
<dbReference type="Gene3D" id="3.40.1630.10">
    <property type="entry name" value="YhiQ-like domain"/>
    <property type="match status" value="1"/>
</dbReference>
<dbReference type="HAMAP" id="MF_01523">
    <property type="entry name" value="16SrRNA_methyltr_J"/>
    <property type="match status" value="1"/>
</dbReference>
<dbReference type="InterPro" id="IPR007536">
    <property type="entry name" value="16SrRNA_methylTrfase_J"/>
</dbReference>
<dbReference type="InterPro" id="IPR029063">
    <property type="entry name" value="SAM-dependent_MTases_sf"/>
</dbReference>
<dbReference type="NCBIfam" id="NF008012">
    <property type="entry name" value="PRK10742.1"/>
    <property type="match status" value="1"/>
</dbReference>
<dbReference type="PANTHER" id="PTHR36112">
    <property type="entry name" value="RIBOSOMAL RNA SMALL SUBUNIT METHYLTRANSFERASE J"/>
    <property type="match status" value="1"/>
</dbReference>
<dbReference type="PANTHER" id="PTHR36112:SF1">
    <property type="entry name" value="RIBOSOMAL RNA SMALL SUBUNIT METHYLTRANSFERASE J"/>
    <property type="match status" value="1"/>
</dbReference>
<dbReference type="Pfam" id="PF04445">
    <property type="entry name" value="SAM_MT"/>
    <property type="match status" value="1"/>
</dbReference>
<dbReference type="SUPFAM" id="SSF53335">
    <property type="entry name" value="S-adenosyl-L-methionine-dependent methyltransferases"/>
    <property type="match status" value="1"/>
</dbReference>
<comment type="function">
    <text evidence="1">Specifically methylates the guanosine in position 1516 of 16S rRNA.</text>
</comment>
<comment type="catalytic activity">
    <reaction evidence="1">
        <text>guanosine(1516) in 16S rRNA + S-adenosyl-L-methionine = N(2)-methylguanosine(1516) in 16S rRNA + S-adenosyl-L-homocysteine + H(+)</text>
        <dbReference type="Rhea" id="RHEA:43220"/>
        <dbReference type="Rhea" id="RHEA-COMP:10412"/>
        <dbReference type="Rhea" id="RHEA-COMP:10413"/>
        <dbReference type="ChEBI" id="CHEBI:15378"/>
        <dbReference type="ChEBI" id="CHEBI:57856"/>
        <dbReference type="ChEBI" id="CHEBI:59789"/>
        <dbReference type="ChEBI" id="CHEBI:74269"/>
        <dbReference type="ChEBI" id="CHEBI:74481"/>
        <dbReference type="EC" id="2.1.1.242"/>
    </reaction>
</comment>
<comment type="subcellular location">
    <subcellularLocation>
        <location evidence="1">Cytoplasm</location>
    </subcellularLocation>
</comment>
<comment type="similarity">
    <text evidence="1">Belongs to the methyltransferase superfamily. RsmJ family.</text>
</comment>
<keyword id="KW-0963">Cytoplasm</keyword>
<keyword id="KW-0489">Methyltransferase</keyword>
<keyword id="KW-0698">rRNA processing</keyword>
<keyword id="KW-0949">S-adenosyl-L-methionine</keyword>
<keyword id="KW-0808">Transferase</keyword>
<feature type="chain" id="PRO_0000292651" description="Ribosomal RNA small subunit methyltransferase J">
    <location>
        <begin position="1"/>
        <end position="250"/>
    </location>
</feature>
<feature type="binding site" evidence="1">
    <location>
        <begin position="101"/>
        <end position="102"/>
    </location>
    <ligand>
        <name>S-adenosyl-L-methionine</name>
        <dbReference type="ChEBI" id="CHEBI:59789"/>
    </ligand>
</feature>
<feature type="binding site" evidence="1">
    <location>
        <begin position="117"/>
        <end position="118"/>
    </location>
    <ligand>
        <name>S-adenosyl-L-methionine</name>
        <dbReference type="ChEBI" id="CHEBI:59789"/>
    </ligand>
</feature>
<feature type="binding site" evidence="1">
    <location>
        <begin position="153"/>
        <end position="154"/>
    </location>
    <ligand>
        <name>S-adenosyl-L-methionine</name>
        <dbReference type="ChEBI" id="CHEBI:59789"/>
    </ligand>
</feature>
<feature type="binding site" evidence="1">
    <location>
        <position position="171"/>
    </location>
    <ligand>
        <name>S-adenosyl-L-methionine</name>
        <dbReference type="ChEBI" id="CHEBI:59789"/>
    </ligand>
</feature>
<organism>
    <name type="scientific">Shigella flexneri serotype 5b (strain 8401)</name>
    <dbReference type="NCBI Taxonomy" id="373384"/>
    <lineage>
        <taxon>Bacteria</taxon>
        <taxon>Pseudomonadati</taxon>
        <taxon>Pseudomonadota</taxon>
        <taxon>Gammaproteobacteria</taxon>
        <taxon>Enterobacterales</taxon>
        <taxon>Enterobacteriaceae</taxon>
        <taxon>Shigella</taxon>
    </lineage>
</organism>
<sequence length="250" mass="26919">MKICLIDETGAGDGALSVLAARWGLEHDEDNLMALVLTPEHLELRKRDEPKLGGIFVDFVGGAMAHRRKFGGGRGEAVAKAVGIKGDYLPDVVDATAGLGRDAFVLASVGCRVRMLERNPVVAALLDDGLARGYADAEIGGWLQERLQLIHASSLTALTDITPRPQVVYLDPMFPHKQKSALVKKEMRVFQSLVGPDLDADGLLEPARLLATKRVVVKRPDYAPPLANVATPNAVVTKGHRFDIYAGTPV</sequence>